<sequence>MAAMDTGQRADPSNPGDKEGDLQGLWQELYQLQAKQKKLKREVEKHKLFEDYLIKVLEKIPEGCTGWEEPEEVLVEATVKHYGKLFTASQDTQKRLEAFCQMIQAVHRSLESLEEDHRALIASRSGCVSCRRSATASRSSGGS</sequence>
<organism>
    <name type="scientific">Homo sapiens</name>
    <name type="common">Human</name>
    <dbReference type="NCBI Taxonomy" id="9606"/>
    <lineage>
        <taxon>Eukaryota</taxon>
        <taxon>Metazoa</taxon>
        <taxon>Chordata</taxon>
        <taxon>Craniata</taxon>
        <taxon>Vertebrata</taxon>
        <taxon>Euteleostomi</taxon>
        <taxon>Mammalia</taxon>
        <taxon>Eutheria</taxon>
        <taxon>Euarchontoglires</taxon>
        <taxon>Primates</taxon>
        <taxon>Haplorrhini</taxon>
        <taxon>Catarrhini</taxon>
        <taxon>Hominidae</taxon>
        <taxon>Homo</taxon>
    </lineage>
</organism>
<proteinExistence type="evidence at protein level"/>
<feature type="chain" id="PRO_0000089892" description="Uncharacterized protein CCDC197">
    <location>
        <begin position="1"/>
        <end position="143"/>
    </location>
</feature>
<feature type="region of interest" description="Disordered" evidence="1">
    <location>
        <begin position="1"/>
        <end position="21"/>
    </location>
</feature>
<feature type="splice variant" id="VSP_007204" description="In isoform 2." evidence="2">
    <original>IASRSGC</original>
    <variation>MLLSHNK</variation>
    <location>
        <begin position="121"/>
        <end position="127"/>
    </location>
</feature>
<feature type="splice variant" id="VSP_007205" description="In isoform 2." evidence="2">
    <location>
        <begin position="128"/>
        <end position="143"/>
    </location>
</feature>
<name>CC197_HUMAN</name>
<reference key="1">
    <citation type="journal article" date="2004" name="Nat. Genet.">
        <title>Complete sequencing and characterization of 21,243 full-length human cDNAs.</title>
        <authorList>
            <person name="Ota T."/>
            <person name="Suzuki Y."/>
            <person name="Nishikawa T."/>
            <person name="Otsuki T."/>
            <person name="Sugiyama T."/>
            <person name="Irie R."/>
            <person name="Wakamatsu A."/>
            <person name="Hayashi K."/>
            <person name="Sato H."/>
            <person name="Nagai K."/>
            <person name="Kimura K."/>
            <person name="Makita H."/>
            <person name="Sekine M."/>
            <person name="Obayashi M."/>
            <person name="Nishi T."/>
            <person name="Shibahara T."/>
            <person name="Tanaka T."/>
            <person name="Ishii S."/>
            <person name="Yamamoto J."/>
            <person name="Saito K."/>
            <person name="Kawai Y."/>
            <person name="Isono Y."/>
            <person name="Nakamura Y."/>
            <person name="Nagahari K."/>
            <person name="Murakami K."/>
            <person name="Yasuda T."/>
            <person name="Iwayanagi T."/>
            <person name="Wagatsuma M."/>
            <person name="Shiratori A."/>
            <person name="Sudo H."/>
            <person name="Hosoiri T."/>
            <person name="Kaku Y."/>
            <person name="Kodaira H."/>
            <person name="Kondo H."/>
            <person name="Sugawara M."/>
            <person name="Takahashi M."/>
            <person name="Kanda K."/>
            <person name="Yokoi T."/>
            <person name="Furuya T."/>
            <person name="Kikkawa E."/>
            <person name="Omura Y."/>
            <person name="Abe K."/>
            <person name="Kamihara K."/>
            <person name="Katsuta N."/>
            <person name="Sato K."/>
            <person name="Tanikawa M."/>
            <person name="Yamazaki M."/>
            <person name="Ninomiya K."/>
            <person name="Ishibashi T."/>
            <person name="Yamashita H."/>
            <person name="Murakawa K."/>
            <person name="Fujimori K."/>
            <person name="Tanai H."/>
            <person name="Kimata M."/>
            <person name="Watanabe M."/>
            <person name="Hiraoka S."/>
            <person name="Chiba Y."/>
            <person name="Ishida S."/>
            <person name="Ono Y."/>
            <person name="Takiguchi S."/>
            <person name="Watanabe S."/>
            <person name="Yosida M."/>
            <person name="Hotuta T."/>
            <person name="Kusano J."/>
            <person name="Kanehori K."/>
            <person name="Takahashi-Fujii A."/>
            <person name="Hara H."/>
            <person name="Tanase T.-O."/>
            <person name="Nomura Y."/>
            <person name="Togiya S."/>
            <person name="Komai F."/>
            <person name="Hara R."/>
            <person name="Takeuchi K."/>
            <person name="Arita M."/>
            <person name="Imose N."/>
            <person name="Musashino K."/>
            <person name="Yuuki H."/>
            <person name="Oshima A."/>
            <person name="Sasaki N."/>
            <person name="Aotsuka S."/>
            <person name="Yoshikawa Y."/>
            <person name="Matsunawa H."/>
            <person name="Ichihara T."/>
            <person name="Shiohata N."/>
            <person name="Sano S."/>
            <person name="Moriya S."/>
            <person name="Momiyama H."/>
            <person name="Satoh N."/>
            <person name="Takami S."/>
            <person name="Terashima Y."/>
            <person name="Suzuki O."/>
            <person name="Nakagawa S."/>
            <person name="Senoh A."/>
            <person name="Mizoguchi H."/>
            <person name="Goto Y."/>
            <person name="Shimizu F."/>
            <person name="Wakebe H."/>
            <person name="Hishigaki H."/>
            <person name="Watanabe T."/>
            <person name="Sugiyama A."/>
            <person name="Takemoto M."/>
            <person name="Kawakami B."/>
            <person name="Yamazaki M."/>
            <person name="Watanabe K."/>
            <person name="Kumagai A."/>
            <person name="Itakura S."/>
            <person name="Fukuzumi Y."/>
            <person name="Fujimori Y."/>
            <person name="Komiyama M."/>
            <person name="Tashiro H."/>
            <person name="Tanigami A."/>
            <person name="Fujiwara T."/>
            <person name="Ono T."/>
            <person name="Yamada K."/>
            <person name="Fujii Y."/>
            <person name="Ozaki K."/>
            <person name="Hirao M."/>
            <person name="Ohmori Y."/>
            <person name="Kawabata A."/>
            <person name="Hikiji T."/>
            <person name="Kobatake N."/>
            <person name="Inagaki H."/>
            <person name="Ikema Y."/>
            <person name="Okamoto S."/>
            <person name="Okitani R."/>
            <person name="Kawakami T."/>
            <person name="Noguchi S."/>
            <person name="Itoh T."/>
            <person name="Shigeta K."/>
            <person name="Senba T."/>
            <person name="Matsumura K."/>
            <person name="Nakajima Y."/>
            <person name="Mizuno T."/>
            <person name="Morinaga M."/>
            <person name="Sasaki M."/>
            <person name="Togashi T."/>
            <person name="Oyama M."/>
            <person name="Hata H."/>
            <person name="Watanabe M."/>
            <person name="Komatsu T."/>
            <person name="Mizushima-Sugano J."/>
            <person name="Satoh T."/>
            <person name="Shirai Y."/>
            <person name="Takahashi Y."/>
            <person name="Nakagawa K."/>
            <person name="Okumura K."/>
            <person name="Nagase T."/>
            <person name="Nomura N."/>
            <person name="Kikuchi H."/>
            <person name="Masuho Y."/>
            <person name="Yamashita R."/>
            <person name="Nakai K."/>
            <person name="Yada T."/>
            <person name="Nakamura Y."/>
            <person name="Ohara O."/>
            <person name="Isogai T."/>
            <person name="Sugano S."/>
        </authorList>
    </citation>
    <scope>NUCLEOTIDE SEQUENCE [LARGE SCALE MRNA] (ISOFORM 2)</scope>
    <source>
        <tissue>Testis</tissue>
    </source>
</reference>
<reference key="2">
    <citation type="journal article" date="2003" name="Nature">
        <title>The DNA sequence and analysis of human chromosome 14.</title>
        <authorList>
            <person name="Heilig R."/>
            <person name="Eckenberg R."/>
            <person name="Petit J.-L."/>
            <person name="Fonknechten N."/>
            <person name="Da Silva C."/>
            <person name="Cattolico L."/>
            <person name="Levy M."/>
            <person name="Barbe V."/>
            <person name="De Berardinis V."/>
            <person name="Ureta-Vidal A."/>
            <person name="Pelletier E."/>
            <person name="Vico V."/>
            <person name="Anthouard V."/>
            <person name="Rowen L."/>
            <person name="Madan A."/>
            <person name="Qin S."/>
            <person name="Sun H."/>
            <person name="Du H."/>
            <person name="Pepin K."/>
            <person name="Artiguenave F."/>
            <person name="Robert C."/>
            <person name="Cruaud C."/>
            <person name="Bruels T."/>
            <person name="Jaillon O."/>
            <person name="Friedlander L."/>
            <person name="Samson G."/>
            <person name="Brottier P."/>
            <person name="Cure S."/>
            <person name="Segurens B."/>
            <person name="Aniere F."/>
            <person name="Samain S."/>
            <person name="Crespeau H."/>
            <person name="Abbasi N."/>
            <person name="Aiach N."/>
            <person name="Boscus D."/>
            <person name="Dickhoff R."/>
            <person name="Dors M."/>
            <person name="Dubois I."/>
            <person name="Friedman C."/>
            <person name="Gouyvenoux M."/>
            <person name="James R."/>
            <person name="Madan A."/>
            <person name="Mairey-Estrada B."/>
            <person name="Mangenot S."/>
            <person name="Martins N."/>
            <person name="Menard M."/>
            <person name="Oztas S."/>
            <person name="Ratcliffe A."/>
            <person name="Shaffer T."/>
            <person name="Trask B."/>
            <person name="Vacherie B."/>
            <person name="Bellemere C."/>
            <person name="Belser C."/>
            <person name="Besnard-Gonnet M."/>
            <person name="Bartol-Mavel D."/>
            <person name="Boutard M."/>
            <person name="Briez-Silla S."/>
            <person name="Combette S."/>
            <person name="Dufosse-Laurent V."/>
            <person name="Ferron C."/>
            <person name="Lechaplais C."/>
            <person name="Louesse C."/>
            <person name="Muselet D."/>
            <person name="Magdelenat G."/>
            <person name="Pateau E."/>
            <person name="Petit E."/>
            <person name="Sirvain-Trukniewicz P."/>
            <person name="Trybou A."/>
            <person name="Vega-Czarny N."/>
            <person name="Bataille E."/>
            <person name="Bluet E."/>
            <person name="Bordelais I."/>
            <person name="Dubois M."/>
            <person name="Dumont C."/>
            <person name="Guerin T."/>
            <person name="Haffray S."/>
            <person name="Hammadi R."/>
            <person name="Muanga J."/>
            <person name="Pellouin V."/>
            <person name="Robert D."/>
            <person name="Wunderle E."/>
            <person name="Gauguet G."/>
            <person name="Roy A."/>
            <person name="Sainte-Marthe L."/>
            <person name="Verdier J."/>
            <person name="Verdier-Discala C."/>
            <person name="Hillier L.W."/>
            <person name="Fulton L."/>
            <person name="McPherson J."/>
            <person name="Matsuda F."/>
            <person name="Wilson R."/>
            <person name="Scarpelli C."/>
            <person name="Gyapay G."/>
            <person name="Wincker P."/>
            <person name="Saurin W."/>
            <person name="Quetier F."/>
            <person name="Waterston R."/>
            <person name="Hood L."/>
            <person name="Weissenbach J."/>
        </authorList>
    </citation>
    <scope>NUCLEOTIDE SEQUENCE [LARGE SCALE GENOMIC DNA]</scope>
</reference>
<reference key="3">
    <citation type="journal article" date="2004" name="Genome Res.">
        <title>The status, quality, and expansion of the NIH full-length cDNA project: the Mammalian Gene Collection (MGC).</title>
        <authorList>
            <consortium name="The MGC Project Team"/>
        </authorList>
    </citation>
    <scope>NUCLEOTIDE SEQUENCE [LARGE SCALE MRNA] (ISOFORM 1)</scope>
    <source>
        <tissue>Testis</tissue>
    </source>
</reference>
<keyword id="KW-0025">Alternative splicing</keyword>
<keyword id="KW-1185">Reference proteome</keyword>
<evidence type="ECO:0000256" key="1">
    <source>
        <dbReference type="SAM" id="MobiDB-lite"/>
    </source>
</evidence>
<evidence type="ECO:0000303" key="2">
    <source>
    </source>
</evidence>
<evidence type="ECO:0000305" key="3"/>
<evidence type="ECO:0000312" key="4">
    <source>
        <dbReference type="HGNC" id="HGNC:19860"/>
    </source>
</evidence>
<gene>
    <name evidence="4" type="primary">CCDC197</name>
    <name evidence="4" type="synonym">C14orf48</name>
    <name evidence="4" type="synonym">LINC00521</name>
</gene>
<dbReference type="EMBL" id="AK097741">
    <property type="protein sequence ID" value="BAC05156.1"/>
    <property type="status" value="ALT_INIT"/>
    <property type="molecule type" value="mRNA"/>
</dbReference>
<dbReference type="EMBL" id="AL079302">
    <property type="status" value="NOT_ANNOTATED_CDS"/>
    <property type="molecule type" value="Genomic_DNA"/>
</dbReference>
<dbReference type="EMBL" id="BC021728">
    <property type="status" value="NOT_ANNOTATED_CDS"/>
    <property type="molecule type" value="mRNA"/>
</dbReference>
<dbReference type="SMR" id="Q8NCU1"/>
<dbReference type="FunCoup" id="Q8NCU1">
    <property type="interactions" value="1"/>
</dbReference>
<dbReference type="IntAct" id="Q8NCU1">
    <property type="interactions" value="19"/>
</dbReference>
<dbReference type="MINT" id="Q8NCU1"/>
<dbReference type="STRING" id="9606.ENSP00000490086"/>
<dbReference type="BioMuta" id="CCDC197"/>
<dbReference type="DMDM" id="30172877"/>
<dbReference type="MassIVE" id="Q8NCU1"/>
<dbReference type="PeptideAtlas" id="Q8NCU1"/>
<dbReference type="Ensembl" id="ENST00000359253.2">
    <molecule id="Q8NCU1-1"/>
    <property type="protein sequence ID" value="ENSP00000490490.1"/>
    <property type="gene ID" value="ENSG00000175699.15"/>
</dbReference>
<dbReference type="AGR" id="HGNC:19860"/>
<dbReference type="GeneCards" id="CCDC197"/>
<dbReference type="HGNC" id="HGNC:19860">
    <property type="gene designation" value="CCDC197"/>
</dbReference>
<dbReference type="neXtProt" id="NX_Q8NCU1"/>
<dbReference type="OpenTargets" id="ENSG00000175699"/>
<dbReference type="VEuPathDB" id="HostDB:ENSG00000175699"/>
<dbReference type="GeneTree" id="ENSGT00510000049662"/>
<dbReference type="InParanoid" id="Q8NCU1"/>
<dbReference type="OrthoDB" id="2134857at2759"/>
<dbReference type="PAN-GO" id="Q8NCU1">
    <property type="GO annotations" value="0 GO annotations based on evolutionary models"/>
</dbReference>
<dbReference type="PhylomeDB" id="Q8NCU1"/>
<dbReference type="PathwayCommons" id="Q8NCU1"/>
<dbReference type="SignaLink" id="Q8NCU1"/>
<dbReference type="ChiTaRS" id="LINC00521">
    <property type="organism name" value="human"/>
</dbReference>
<dbReference type="Pharos" id="Q8NCU1">
    <property type="development level" value="Tdark"/>
</dbReference>
<dbReference type="PRO" id="PR:Q8NCU1"/>
<dbReference type="Proteomes" id="UP000005640">
    <property type="component" value="Chromosome 14"/>
</dbReference>
<dbReference type="RNAct" id="Q8NCU1">
    <property type="molecule type" value="protein"/>
</dbReference>
<dbReference type="Bgee" id="ENSG00000175699">
    <property type="expression patterns" value="Expressed in male germ line stem cell (sensu Vertebrata) in testis and 50 other cell types or tissues"/>
</dbReference>
<dbReference type="ExpressionAtlas" id="Q8NCU1">
    <property type="expression patterns" value="baseline and differential"/>
</dbReference>
<dbReference type="InterPro" id="IPR051147">
    <property type="entry name" value="CFAP_domain-containing"/>
</dbReference>
<dbReference type="PANTHER" id="PTHR21683:SF18">
    <property type="entry name" value="COILED-COIL DOMAIN-CONTAINING PROTEIN 42 HOMOLOG"/>
    <property type="match status" value="1"/>
</dbReference>
<dbReference type="PANTHER" id="PTHR21683">
    <property type="entry name" value="COILED-COIL DOMAIN-CONTAINING PROTEIN 42 LIKE-2-LIKE-RELATED"/>
    <property type="match status" value="1"/>
</dbReference>
<accession>Q8NCU1</accession>
<accession>A0A1B0GVF2</accession>
<accession>Q8N7S1</accession>
<comment type="interaction">
    <interactant intactId="EBI-750686">
        <id>Q8NCU1</id>
    </interactant>
    <interactant intactId="EBI-745073">
        <id>Q9BXY8</id>
        <label>BEX2</label>
    </interactant>
    <organismsDiffer>false</organismsDiffer>
    <experiments>3</experiments>
</comment>
<comment type="interaction">
    <interactant intactId="EBI-750686">
        <id>Q8NCU1</id>
    </interactant>
    <interactant intactId="EBI-747505">
        <id>Q8TAB5</id>
        <label>C1orf216</label>
    </interactant>
    <organismsDiffer>false</organismsDiffer>
    <experiments>8</experiments>
</comment>
<comment type="interaction">
    <interactant intactId="EBI-750686">
        <id>Q8NCU1</id>
    </interactant>
    <interactant intactId="EBI-10749669">
        <id>Q8IYE0</id>
        <label>CCDC146</label>
    </interactant>
    <organismsDiffer>false</organismsDiffer>
    <experiments>5</experiments>
</comment>
<comment type="interaction">
    <interactant intactId="EBI-750686">
        <id>Q8NCU1</id>
    </interactant>
    <interactant intactId="EBI-10175300">
        <id>Q8TD31-3</id>
        <label>CCHCR1</label>
    </interactant>
    <organismsDiffer>false</organismsDiffer>
    <experiments>3</experiments>
</comment>
<comment type="interaction">
    <interactant intactId="EBI-750686">
        <id>Q8NCU1</id>
    </interactant>
    <interactant intactId="EBI-11521003">
        <id>Q9UIA0</id>
        <label>CYTH4</label>
    </interactant>
    <organismsDiffer>false</organismsDiffer>
    <experiments>3</experiments>
</comment>
<comment type="interaction">
    <interactant intactId="EBI-750686">
        <id>Q8NCU1</id>
    </interactant>
    <interactant intactId="EBI-11988027">
        <id>Q9NRI5-2</id>
        <label>DISC1</label>
    </interactant>
    <organismsDiffer>false</organismsDiffer>
    <experiments>3</experiments>
</comment>
<comment type="interaction">
    <interactant intactId="EBI-750686">
        <id>Q8NCU1</id>
    </interactant>
    <interactant intactId="EBI-2430095">
        <id>P12035</id>
        <label>KRT3</label>
    </interactant>
    <organismsDiffer>false</organismsDiffer>
    <experiments>3</experiments>
</comment>
<comment type="interaction">
    <interactant intactId="EBI-750686">
        <id>Q8NCU1</id>
    </interactant>
    <interactant intactId="EBI-2949715">
        <id>O95678</id>
        <label>KRT75</label>
    </interactant>
    <organismsDiffer>false</organismsDiffer>
    <experiments>3</experiments>
</comment>
<comment type="interaction">
    <interactant intactId="EBI-750686">
        <id>Q8NCU1</id>
    </interactant>
    <interactant intactId="EBI-8473670">
        <id>O95447</id>
        <label>LCA5L</label>
    </interactant>
    <organismsDiffer>false</organismsDiffer>
    <experiments>3</experiments>
</comment>
<comment type="interaction">
    <interactant intactId="EBI-750686">
        <id>Q8NCU1</id>
    </interactant>
    <interactant intactId="EBI-741158">
        <id>Q96HA8</id>
        <label>NTAQ1</label>
    </interactant>
    <organismsDiffer>false</organismsDiffer>
    <experiments>3</experiments>
</comment>
<comment type="interaction">
    <interactant intactId="EBI-750686">
        <id>Q8NCU1</id>
    </interactant>
    <interactant intactId="EBI-398874">
        <id>Q9UBU9</id>
        <label>NXF1</label>
    </interactant>
    <organismsDiffer>false</organismsDiffer>
    <experiments>3</experiments>
</comment>
<comment type="interaction">
    <interactant intactId="EBI-750686">
        <id>Q8NCU1</id>
    </interactant>
    <interactant intactId="EBI-11984663">
        <id>Q06455-2</id>
        <label>RUNX1T1</label>
    </interactant>
    <organismsDiffer>false</organismsDiffer>
    <experiments>3</experiments>
</comment>
<comment type="interaction">
    <interactant intactId="EBI-750686">
        <id>Q8NCU1</id>
    </interactant>
    <interactant intactId="EBI-358489">
        <id>Q96GM5</id>
        <label>SMARCD1</label>
    </interactant>
    <organismsDiffer>false</organismsDiffer>
    <experiments>3</experiments>
</comment>
<comment type="interaction">
    <interactant intactId="EBI-750686">
        <id>Q8NCU1</id>
    </interactant>
    <interactant intactId="EBI-2932492">
        <id>Q99757</id>
        <label>TXN2</label>
    </interactant>
    <organismsDiffer>false</organismsDiffer>
    <experiments>3</experiments>
</comment>
<comment type="interaction">
    <interactant intactId="EBI-750686">
        <id>Q8NCU1</id>
    </interactant>
    <interactant intactId="EBI-739895">
        <id>Q8N6Y0</id>
        <label>USHBP1</label>
    </interactant>
    <organismsDiffer>false</organismsDiffer>
    <experiments>3</experiments>
</comment>
<comment type="interaction">
    <interactant intactId="EBI-750686">
        <id>Q8NCU1</id>
    </interactant>
    <interactant intactId="EBI-712969">
        <id>Q9Y3C0</id>
        <label>WASHC3</label>
    </interactant>
    <organismsDiffer>false</organismsDiffer>
    <experiments>7</experiments>
</comment>
<comment type="interaction">
    <interactant intactId="EBI-750686">
        <id>Q8NCU1</id>
    </interactant>
    <interactant intactId="EBI-10255097">
        <id>Q6ZN96</id>
    </interactant>
    <organismsDiffer>false</organismsDiffer>
    <experiments>3</experiments>
</comment>
<comment type="alternative products">
    <event type="alternative splicing"/>
    <isoform>
        <id>Q8NCU1-1</id>
        <name>1</name>
        <sequence type="displayed"/>
    </isoform>
    <isoform>
        <id>Q8NCU1-2</id>
        <name>2</name>
        <sequence type="described" ref="VSP_007204 VSP_007205"/>
    </isoform>
</comment>
<comment type="sequence caution" evidence="3">
    <conflict type="erroneous initiation">
        <sequence resource="EMBL-CDS" id="BAC05156"/>
    </conflict>
    <text>Truncated N-terminus.</text>
</comment>
<protein>
    <recommendedName>
        <fullName evidence="3">Uncharacterized protein CCDC197</fullName>
    </recommendedName>
    <alternativeName>
        <fullName evidence="4">Coiled-coil domain-containing protein 197</fullName>
    </alternativeName>
</protein>